<sequence length="471" mass="53634">MKIKTRFAPSPTGYLHVGGARTALYSWLFARHHGGEFVLRIEDTDLERSTPEAIEAIMDGMNWLNLEWDEGPYFQTKRFDRYNAVIDEMLEAGTAYKCYCSKERLEQLREDQMAKGEKPRYDGRCRHSHEHHADDEPCVVRFANPQDGSVIFDDQIRGPIEFSNQELDDLIIRRTDGSPTYNFCVVVDDWDMEITHVIRGEDHINNTPRQINILKALNAPVPMYAHVSMINGDDGKKLSKRHGAVSVMQYRDDGYLPEALLNYLVRLGWSSGDQEIFTREEMIKLFSLGAVSKSASAFNTDKLLWLNHHYINTLAPEYVATHLQWHIEQENIDTRNGPQLAELVKLLGERCKTLKEMAQSCRYFYEDFSEFDADAAKKHLRPVARQPLEVVRDKLSAITDWSAENVHHAIQATADELEVGMGKVGMPLRVAVTGAGQSPALDVTVHAIGKTRSIERINKALGFIAERESQQ</sequence>
<feature type="chain" id="PRO_1000074331" description="Glutamate--tRNA ligase">
    <location>
        <begin position="1"/>
        <end position="471"/>
    </location>
</feature>
<feature type="short sequence motif" description="'HIGH' region" evidence="1">
    <location>
        <begin position="9"/>
        <end position="19"/>
    </location>
</feature>
<feature type="short sequence motif" description="'KMSKS' region" evidence="1">
    <location>
        <begin position="237"/>
        <end position="241"/>
    </location>
</feature>
<feature type="binding site" evidence="1">
    <location>
        <position position="98"/>
    </location>
    <ligand>
        <name>Zn(2+)</name>
        <dbReference type="ChEBI" id="CHEBI:29105"/>
    </ligand>
</feature>
<feature type="binding site" evidence="1">
    <location>
        <position position="100"/>
    </location>
    <ligand>
        <name>Zn(2+)</name>
        <dbReference type="ChEBI" id="CHEBI:29105"/>
    </ligand>
</feature>
<feature type="binding site" evidence="1">
    <location>
        <position position="125"/>
    </location>
    <ligand>
        <name>Zn(2+)</name>
        <dbReference type="ChEBI" id="CHEBI:29105"/>
    </ligand>
</feature>
<feature type="binding site" evidence="1">
    <location>
        <position position="127"/>
    </location>
    <ligand>
        <name>Zn(2+)</name>
        <dbReference type="ChEBI" id="CHEBI:29105"/>
    </ligand>
</feature>
<feature type="binding site" evidence="1">
    <location>
        <position position="240"/>
    </location>
    <ligand>
        <name>ATP</name>
        <dbReference type="ChEBI" id="CHEBI:30616"/>
    </ligand>
</feature>
<proteinExistence type="inferred from homology"/>
<organism>
    <name type="scientific">Salmonella paratyphi B (strain ATCC BAA-1250 / SPB7)</name>
    <dbReference type="NCBI Taxonomy" id="1016998"/>
    <lineage>
        <taxon>Bacteria</taxon>
        <taxon>Pseudomonadati</taxon>
        <taxon>Pseudomonadota</taxon>
        <taxon>Gammaproteobacteria</taxon>
        <taxon>Enterobacterales</taxon>
        <taxon>Enterobacteriaceae</taxon>
        <taxon>Salmonella</taxon>
    </lineage>
</organism>
<keyword id="KW-0030">Aminoacyl-tRNA synthetase</keyword>
<keyword id="KW-0067">ATP-binding</keyword>
<keyword id="KW-0963">Cytoplasm</keyword>
<keyword id="KW-0436">Ligase</keyword>
<keyword id="KW-0479">Metal-binding</keyword>
<keyword id="KW-0547">Nucleotide-binding</keyword>
<keyword id="KW-0648">Protein biosynthesis</keyword>
<keyword id="KW-0862">Zinc</keyword>
<comment type="function">
    <text evidence="1">Catalyzes the attachment of glutamate to tRNA(Glu) in a two-step reaction: glutamate is first activated by ATP to form Glu-AMP and then transferred to the acceptor end of tRNA(Glu).</text>
</comment>
<comment type="catalytic activity">
    <reaction evidence="1">
        <text>tRNA(Glu) + L-glutamate + ATP = L-glutamyl-tRNA(Glu) + AMP + diphosphate</text>
        <dbReference type="Rhea" id="RHEA:23540"/>
        <dbReference type="Rhea" id="RHEA-COMP:9663"/>
        <dbReference type="Rhea" id="RHEA-COMP:9680"/>
        <dbReference type="ChEBI" id="CHEBI:29985"/>
        <dbReference type="ChEBI" id="CHEBI:30616"/>
        <dbReference type="ChEBI" id="CHEBI:33019"/>
        <dbReference type="ChEBI" id="CHEBI:78442"/>
        <dbReference type="ChEBI" id="CHEBI:78520"/>
        <dbReference type="ChEBI" id="CHEBI:456215"/>
        <dbReference type="EC" id="6.1.1.17"/>
    </reaction>
</comment>
<comment type="cofactor">
    <cofactor evidence="1">
        <name>Zn(2+)</name>
        <dbReference type="ChEBI" id="CHEBI:29105"/>
    </cofactor>
    <text evidence="1">Binds 1 zinc ion per subunit.</text>
</comment>
<comment type="subunit">
    <text evidence="1">Monomer.</text>
</comment>
<comment type="subcellular location">
    <subcellularLocation>
        <location evidence="1">Cytoplasm</location>
    </subcellularLocation>
</comment>
<comment type="similarity">
    <text evidence="1">Belongs to the class-I aminoacyl-tRNA synthetase family. Glutamate--tRNA ligase type 1 subfamily.</text>
</comment>
<reference key="1">
    <citation type="submission" date="2007-11" db="EMBL/GenBank/DDBJ databases">
        <authorList>
            <consortium name="The Salmonella enterica serovar Paratyphi B Genome Sequencing Project"/>
            <person name="McClelland M."/>
            <person name="Sanderson E.K."/>
            <person name="Porwollik S."/>
            <person name="Spieth J."/>
            <person name="Clifton W.S."/>
            <person name="Fulton R."/>
            <person name="Cordes M."/>
            <person name="Wollam A."/>
            <person name="Shah N."/>
            <person name="Pepin K."/>
            <person name="Bhonagiri V."/>
            <person name="Nash W."/>
            <person name="Johnson M."/>
            <person name="Thiruvilangam P."/>
            <person name="Wilson R."/>
        </authorList>
    </citation>
    <scope>NUCLEOTIDE SEQUENCE [LARGE SCALE GENOMIC DNA]</scope>
    <source>
        <strain>ATCC BAA-1250 / SPB7</strain>
    </source>
</reference>
<name>SYE_SALPB</name>
<dbReference type="EC" id="6.1.1.17" evidence="1"/>
<dbReference type="EMBL" id="CP000886">
    <property type="protein sequence ID" value="ABX65972.1"/>
    <property type="molecule type" value="Genomic_DNA"/>
</dbReference>
<dbReference type="RefSeq" id="WP_000695623.1">
    <property type="nucleotide sequence ID" value="NC_010102.1"/>
</dbReference>
<dbReference type="SMR" id="A9N372"/>
<dbReference type="KEGG" id="spq:SPAB_00543"/>
<dbReference type="PATRIC" id="fig|1016998.12.peg.512"/>
<dbReference type="HOGENOM" id="CLU_015768_6_0_6"/>
<dbReference type="BioCyc" id="SENT1016998:SPAB_RS02245-MONOMER"/>
<dbReference type="Proteomes" id="UP000008556">
    <property type="component" value="Chromosome"/>
</dbReference>
<dbReference type="GO" id="GO:0005829">
    <property type="term" value="C:cytosol"/>
    <property type="evidence" value="ECO:0007669"/>
    <property type="project" value="TreeGrafter"/>
</dbReference>
<dbReference type="GO" id="GO:0005524">
    <property type="term" value="F:ATP binding"/>
    <property type="evidence" value="ECO:0007669"/>
    <property type="project" value="UniProtKB-UniRule"/>
</dbReference>
<dbReference type="GO" id="GO:0004818">
    <property type="term" value="F:glutamate-tRNA ligase activity"/>
    <property type="evidence" value="ECO:0007669"/>
    <property type="project" value="UniProtKB-UniRule"/>
</dbReference>
<dbReference type="GO" id="GO:0000049">
    <property type="term" value="F:tRNA binding"/>
    <property type="evidence" value="ECO:0007669"/>
    <property type="project" value="InterPro"/>
</dbReference>
<dbReference type="GO" id="GO:0008270">
    <property type="term" value="F:zinc ion binding"/>
    <property type="evidence" value="ECO:0007669"/>
    <property type="project" value="UniProtKB-UniRule"/>
</dbReference>
<dbReference type="GO" id="GO:0006424">
    <property type="term" value="P:glutamyl-tRNA aminoacylation"/>
    <property type="evidence" value="ECO:0007669"/>
    <property type="project" value="UniProtKB-UniRule"/>
</dbReference>
<dbReference type="CDD" id="cd00808">
    <property type="entry name" value="GluRS_core"/>
    <property type="match status" value="1"/>
</dbReference>
<dbReference type="FunFam" id="1.10.10.350:FF:000001">
    <property type="entry name" value="Glutamate--tRNA ligase"/>
    <property type="match status" value="1"/>
</dbReference>
<dbReference type="FunFam" id="3.40.50.620:FF:000007">
    <property type="entry name" value="Glutamate--tRNA ligase"/>
    <property type="match status" value="1"/>
</dbReference>
<dbReference type="Gene3D" id="1.10.10.350">
    <property type="match status" value="1"/>
</dbReference>
<dbReference type="Gene3D" id="3.40.50.620">
    <property type="entry name" value="HUPs"/>
    <property type="match status" value="1"/>
</dbReference>
<dbReference type="HAMAP" id="MF_00022">
    <property type="entry name" value="Glu_tRNA_synth_type1"/>
    <property type="match status" value="1"/>
</dbReference>
<dbReference type="InterPro" id="IPR045462">
    <property type="entry name" value="aa-tRNA-synth_I_cd-bd"/>
</dbReference>
<dbReference type="InterPro" id="IPR020751">
    <property type="entry name" value="aa-tRNA-synth_I_codon-bd_sub2"/>
</dbReference>
<dbReference type="InterPro" id="IPR001412">
    <property type="entry name" value="aa-tRNA-synth_I_CS"/>
</dbReference>
<dbReference type="InterPro" id="IPR008925">
    <property type="entry name" value="aa_tRNA-synth_I_cd-bd_sf"/>
</dbReference>
<dbReference type="InterPro" id="IPR004527">
    <property type="entry name" value="Glu-tRNA-ligase_bac/mito"/>
</dbReference>
<dbReference type="InterPro" id="IPR000924">
    <property type="entry name" value="Glu/Gln-tRNA-synth"/>
</dbReference>
<dbReference type="InterPro" id="IPR020058">
    <property type="entry name" value="Glu/Gln-tRNA-synth_Ib_cat-dom"/>
</dbReference>
<dbReference type="InterPro" id="IPR049940">
    <property type="entry name" value="GluQ/Sye"/>
</dbReference>
<dbReference type="InterPro" id="IPR033910">
    <property type="entry name" value="GluRS_core"/>
</dbReference>
<dbReference type="InterPro" id="IPR014729">
    <property type="entry name" value="Rossmann-like_a/b/a_fold"/>
</dbReference>
<dbReference type="NCBIfam" id="TIGR00464">
    <property type="entry name" value="gltX_bact"/>
    <property type="match status" value="1"/>
</dbReference>
<dbReference type="PANTHER" id="PTHR43311">
    <property type="entry name" value="GLUTAMATE--TRNA LIGASE"/>
    <property type="match status" value="1"/>
</dbReference>
<dbReference type="PANTHER" id="PTHR43311:SF2">
    <property type="entry name" value="GLUTAMATE--TRNA LIGASE, MITOCHONDRIAL-RELATED"/>
    <property type="match status" value="1"/>
</dbReference>
<dbReference type="Pfam" id="PF19269">
    <property type="entry name" value="Anticodon_2"/>
    <property type="match status" value="1"/>
</dbReference>
<dbReference type="Pfam" id="PF00749">
    <property type="entry name" value="tRNA-synt_1c"/>
    <property type="match status" value="1"/>
</dbReference>
<dbReference type="PRINTS" id="PR00987">
    <property type="entry name" value="TRNASYNTHGLU"/>
</dbReference>
<dbReference type="SUPFAM" id="SSF48163">
    <property type="entry name" value="An anticodon-binding domain of class I aminoacyl-tRNA synthetases"/>
    <property type="match status" value="1"/>
</dbReference>
<dbReference type="SUPFAM" id="SSF52374">
    <property type="entry name" value="Nucleotidylyl transferase"/>
    <property type="match status" value="1"/>
</dbReference>
<dbReference type="PROSITE" id="PS00178">
    <property type="entry name" value="AA_TRNA_LIGASE_I"/>
    <property type="match status" value="1"/>
</dbReference>
<accession>A9N372</accession>
<protein>
    <recommendedName>
        <fullName evidence="1">Glutamate--tRNA ligase</fullName>
        <ecNumber evidence="1">6.1.1.17</ecNumber>
    </recommendedName>
    <alternativeName>
        <fullName evidence="1">Glutamyl-tRNA synthetase</fullName>
        <shortName evidence="1">GluRS</shortName>
    </alternativeName>
</protein>
<gene>
    <name evidence="1" type="primary">gltX</name>
    <name type="ordered locus">SPAB_00543</name>
</gene>
<evidence type="ECO:0000255" key="1">
    <source>
        <dbReference type="HAMAP-Rule" id="MF_00022"/>
    </source>
</evidence>